<proteinExistence type="inferred from homology"/>
<gene>
    <name type="ordered locus">KPN78578_35270</name>
    <name type="ORF">KPN_03556</name>
</gene>
<dbReference type="EMBL" id="CP000647">
    <property type="protein sequence ID" value="ABR78951.1"/>
    <property type="molecule type" value="Genomic_DNA"/>
</dbReference>
<dbReference type="RefSeq" id="WP_002918206.1">
    <property type="nucleotide sequence ID" value="NC_009648.1"/>
</dbReference>
<dbReference type="SMR" id="A6TEG7"/>
<dbReference type="STRING" id="272620.KPN_03556"/>
<dbReference type="PaxDb" id="272620-KPN_03556"/>
<dbReference type="DNASU" id="5340335"/>
<dbReference type="EnsemblBacteria" id="ABR78951">
    <property type="protein sequence ID" value="ABR78951"/>
    <property type="gene ID" value="KPN_03556"/>
</dbReference>
<dbReference type="KEGG" id="kpn:KPN_03556"/>
<dbReference type="HOGENOM" id="CLU_115353_1_0_6"/>
<dbReference type="Proteomes" id="UP000000265">
    <property type="component" value="Chromosome"/>
</dbReference>
<dbReference type="GO" id="GO:0003676">
    <property type="term" value="F:nucleic acid binding"/>
    <property type="evidence" value="ECO:0007669"/>
    <property type="project" value="InterPro"/>
</dbReference>
<dbReference type="CDD" id="cd20736">
    <property type="entry name" value="PoNe_Nuclease"/>
    <property type="match status" value="1"/>
</dbReference>
<dbReference type="Gene3D" id="3.40.1350.10">
    <property type="match status" value="1"/>
</dbReference>
<dbReference type="HAMAP" id="MF_00048">
    <property type="entry name" value="UPF0102"/>
    <property type="match status" value="1"/>
</dbReference>
<dbReference type="InterPro" id="IPR011335">
    <property type="entry name" value="Restrct_endonuc-II-like"/>
</dbReference>
<dbReference type="InterPro" id="IPR011856">
    <property type="entry name" value="tRNA_endonuc-like_dom_sf"/>
</dbReference>
<dbReference type="InterPro" id="IPR003509">
    <property type="entry name" value="UPF0102_YraN-like"/>
</dbReference>
<dbReference type="NCBIfam" id="NF009150">
    <property type="entry name" value="PRK12497.1-3"/>
    <property type="match status" value="1"/>
</dbReference>
<dbReference type="NCBIfam" id="TIGR00252">
    <property type="entry name" value="YraN family protein"/>
    <property type="match status" value="1"/>
</dbReference>
<dbReference type="PANTHER" id="PTHR34039">
    <property type="entry name" value="UPF0102 PROTEIN YRAN"/>
    <property type="match status" value="1"/>
</dbReference>
<dbReference type="PANTHER" id="PTHR34039:SF1">
    <property type="entry name" value="UPF0102 PROTEIN YRAN"/>
    <property type="match status" value="1"/>
</dbReference>
<dbReference type="Pfam" id="PF02021">
    <property type="entry name" value="UPF0102"/>
    <property type="match status" value="1"/>
</dbReference>
<dbReference type="SUPFAM" id="SSF52980">
    <property type="entry name" value="Restriction endonuclease-like"/>
    <property type="match status" value="1"/>
</dbReference>
<name>Y3527_KLEP7</name>
<organism>
    <name type="scientific">Klebsiella pneumoniae subsp. pneumoniae (strain ATCC 700721 / MGH 78578)</name>
    <dbReference type="NCBI Taxonomy" id="272620"/>
    <lineage>
        <taxon>Bacteria</taxon>
        <taxon>Pseudomonadati</taxon>
        <taxon>Pseudomonadota</taxon>
        <taxon>Gammaproteobacteria</taxon>
        <taxon>Enterobacterales</taxon>
        <taxon>Enterobacteriaceae</taxon>
        <taxon>Klebsiella/Raoultella group</taxon>
        <taxon>Klebsiella</taxon>
        <taxon>Klebsiella pneumoniae complex</taxon>
    </lineage>
</organism>
<sequence>MAQVPAGKNRSGQLSKQTGDAWENQARRWLEGQGLRFIAANARERGGEIDLIMRDGTVTVFIEVRYRRSARYGDAAASVTPQKQQRLLKAARLWLCRQNGSFETVDCRFDVVAFTGNDIQWLKNAFGE</sequence>
<comment type="similarity">
    <text evidence="1">Belongs to the UPF0102 family.</text>
</comment>
<feature type="chain" id="PRO_1000057335" description="UPF0102 protein KPN78578_35270">
    <location>
        <begin position="1"/>
        <end position="128"/>
    </location>
</feature>
<feature type="region of interest" description="Disordered" evidence="2">
    <location>
        <begin position="1"/>
        <end position="20"/>
    </location>
</feature>
<reference key="1">
    <citation type="submission" date="2006-09" db="EMBL/GenBank/DDBJ databases">
        <authorList>
            <consortium name="The Klebsiella pneumonia Genome Sequencing Project"/>
            <person name="McClelland M."/>
            <person name="Sanderson E.K."/>
            <person name="Spieth J."/>
            <person name="Clifton W.S."/>
            <person name="Latreille P."/>
            <person name="Sabo A."/>
            <person name="Pepin K."/>
            <person name="Bhonagiri V."/>
            <person name="Porwollik S."/>
            <person name="Ali J."/>
            <person name="Wilson R.K."/>
        </authorList>
    </citation>
    <scope>NUCLEOTIDE SEQUENCE [LARGE SCALE GENOMIC DNA]</scope>
    <source>
        <strain>ATCC 700721 / MGH 78578</strain>
    </source>
</reference>
<evidence type="ECO:0000255" key="1">
    <source>
        <dbReference type="HAMAP-Rule" id="MF_00048"/>
    </source>
</evidence>
<evidence type="ECO:0000256" key="2">
    <source>
        <dbReference type="SAM" id="MobiDB-lite"/>
    </source>
</evidence>
<protein>
    <recommendedName>
        <fullName evidence="1">UPF0102 protein KPN78578_35270</fullName>
    </recommendedName>
</protein>
<accession>A6TEG7</accession>